<feature type="chain" id="PRO_0000340673" description="UPF0598 protein CG30010">
    <location>
        <begin position="1"/>
        <end position="167"/>
    </location>
</feature>
<sequence length="167" mass="19664">MLFLDDAKMKNFTSCFKEKDFLKFFFNRLRLNKTSRYESEFPYISLCGRERNFIRCDDTPVVFTEQLRKDDTEVLSYAHAGQVLTLPYEPHKLYMDPRNGRVYHPAAPQVGGIGLVRSKLAIELSQHFEFLAGEASPTHFQWNGERLELQNEWVNNTQRFPMNEDCK</sequence>
<organism>
    <name type="scientific">Drosophila melanogaster</name>
    <name type="common">Fruit fly</name>
    <dbReference type="NCBI Taxonomy" id="7227"/>
    <lineage>
        <taxon>Eukaryota</taxon>
        <taxon>Metazoa</taxon>
        <taxon>Ecdysozoa</taxon>
        <taxon>Arthropoda</taxon>
        <taxon>Hexapoda</taxon>
        <taxon>Insecta</taxon>
        <taxon>Pterygota</taxon>
        <taxon>Neoptera</taxon>
        <taxon>Endopterygota</taxon>
        <taxon>Diptera</taxon>
        <taxon>Brachycera</taxon>
        <taxon>Muscomorpha</taxon>
        <taxon>Ephydroidea</taxon>
        <taxon>Drosophilidae</taxon>
        <taxon>Drosophila</taxon>
        <taxon>Sophophora</taxon>
    </lineage>
</organism>
<comment type="similarity">
    <text evidence="1">Belongs to the UPF0598 family.</text>
</comment>
<gene>
    <name type="ORF">CG30010</name>
</gene>
<evidence type="ECO:0000305" key="1"/>
<reference key="1">
    <citation type="journal article" date="2000" name="Science">
        <title>The genome sequence of Drosophila melanogaster.</title>
        <authorList>
            <person name="Adams M.D."/>
            <person name="Celniker S.E."/>
            <person name="Holt R.A."/>
            <person name="Evans C.A."/>
            <person name="Gocayne J.D."/>
            <person name="Amanatides P.G."/>
            <person name="Scherer S.E."/>
            <person name="Li P.W."/>
            <person name="Hoskins R.A."/>
            <person name="Galle R.F."/>
            <person name="George R.A."/>
            <person name="Lewis S.E."/>
            <person name="Richards S."/>
            <person name="Ashburner M."/>
            <person name="Henderson S.N."/>
            <person name="Sutton G.G."/>
            <person name="Wortman J.R."/>
            <person name="Yandell M.D."/>
            <person name="Zhang Q."/>
            <person name="Chen L.X."/>
            <person name="Brandon R.C."/>
            <person name="Rogers Y.-H.C."/>
            <person name="Blazej R.G."/>
            <person name="Champe M."/>
            <person name="Pfeiffer B.D."/>
            <person name="Wan K.H."/>
            <person name="Doyle C."/>
            <person name="Baxter E.G."/>
            <person name="Helt G."/>
            <person name="Nelson C.R."/>
            <person name="Miklos G.L.G."/>
            <person name="Abril J.F."/>
            <person name="Agbayani A."/>
            <person name="An H.-J."/>
            <person name="Andrews-Pfannkoch C."/>
            <person name="Baldwin D."/>
            <person name="Ballew R.M."/>
            <person name="Basu A."/>
            <person name="Baxendale J."/>
            <person name="Bayraktaroglu L."/>
            <person name="Beasley E.M."/>
            <person name="Beeson K.Y."/>
            <person name="Benos P.V."/>
            <person name="Berman B.P."/>
            <person name="Bhandari D."/>
            <person name="Bolshakov S."/>
            <person name="Borkova D."/>
            <person name="Botchan M.R."/>
            <person name="Bouck J."/>
            <person name="Brokstein P."/>
            <person name="Brottier P."/>
            <person name="Burtis K.C."/>
            <person name="Busam D.A."/>
            <person name="Butler H."/>
            <person name="Cadieu E."/>
            <person name="Center A."/>
            <person name="Chandra I."/>
            <person name="Cherry J.M."/>
            <person name="Cawley S."/>
            <person name="Dahlke C."/>
            <person name="Davenport L.B."/>
            <person name="Davies P."/>
            <person name="de Pablos B."/>
            <person name="Delcher A."/>
            <person name="Deng Z."/>
            <person name="Mays A.D."/>
            <person name="Dew I."/>
            <person name="Dietz S.M."/>
            <person name="Dodson K."/>
            <person name="Doup L.E."/>
            <person name="Downes M."/>
            <person name="Dugan-Rocha S."/>
            <person name="Dunkov B.C."/>
            <person name="Dunn P."/>
            <person name="Durbin K.J."/>
            <person name="Evangelista C.C."/>
            <person name="Ferraz C."/>
            <person name="Ferriera S."/>
            <person name="Fleischmann W."/>
            <person name="Fosler C."/>
            <person name="Gabrielian A.E."/>
            <person name="Garg N.S."/>
            <person name="Gelbart W.M."/>
            <person name="Glasser K."/>
            <person name="Glodek A."/>
            <person name="Gong F."/>
            <person name="Gorrell J.H."/>
            <person name="Gu Z."/>
            <person name="Guan P."/>
            <person name="Harris M."/>
            <person name="Harris N.L."/>
            <person name="Harvey D.A."/>
            <person name="Heiman T.J."/>
            <person name="Hernandez J.R."/>
            <person name="Houck J."/>
            <person name="Hostin D."/>
            <person name="Houston K.A."/>
            <person name="Howland T.J."/>
            <person name="Wei M.-H."/>
            <person name="Ibegwam C."/>
            <person name="Jalali M."/>
            <person name="Kalush F."/>
            <person name="Karpen G.H."/>
            <person name="Ke Z."/>
            <person name="Kennison J.A."/>
            <person name="Ketchum K.A."/>
            <person name="Kimmel B.E."/>
            <person name="Kodira C.D."/>
            <person name="Kraft C.L."/>
            <person name="Kravitz S."/>
            <person name="Kulp D."/>
            <person name="Lai Z."/>
            <person name="Lasko P."/>
            <person name="Lei Y."/>
            <person name="Levitsky A.A."/>
            <person name="Li J.H."/>
            <person name="Li Z."/>
            <person name="Liang Y."/>
            <person name="Lin X."/>
            <person name="Liu X."/>
            <person name="Mattei B."/>
            <person name="McIntosh T.C."/>
            <person name="McLeod M.P."/>
            <person name="McPherson D."/>
            <person name="Merkulov G."/>
            <person name="Milshina N.V."/>
            <person name="Mobarry C."/>
            <person name="Morris J."/>
            <person name="Moshrefi A."/>
            <person name="Mount S.M."/>
            <person name="Moy M."/>
            <person name="Murphy B."/>
            <person name="Murphy L."/>
            <person name="Muzny D.M."/>
            <person name="Nelson D.L."/>
            <person name="Nelson D.R."/>
            <person name="Nelson K.A."/>
            <person name="Nixon K."/>
            <person name="Nusskern D.R."/>
            <person name="Pacleb J.M."/>
            <person name="Palazzolo M."/>
            <person name="Pittman G.S."/>
            <person name="Pan S."/>
            <person name="Pollard J."/>
            <person name="Puri V."/>
            <person name="Reese M.G."/>
            <person name="Reinert K."/>
            <person name="Remington K."/>
            <person name="Saunders R.D.C."/>
            <person name="Scheeler F."/>
            <person name="Shen H."/>
            <person name="Shue B.C."/>
            <person name="Siden-Kiamos I."/>
            <person name="Simpson M."/>
            <person name="Skupski M.P."/>
            <person name="Smith T.J."/>
            <person name="Spier E."/>
            <person name="Spradling A.C."/>
            <person name="Stapleton M."/>
            <person name="Strong R."/>
            <person name="Sun E."/>
            <person name="Svirskas R."/>
            <person name="Tector C."/>
            <person name="Turner R."/>
            <person name="Venter E."/>
            <person name="Wang A.H."/>
            <person name="Wang X."/>
            <person name="Wang Z.-Y."/>
            <person name="Wassarman D.A."/>
            <person name="Weinstock G.M."/>
            <person name="Weissenbach J."/>
            <person name="Williams S.M."/>
            <person name="Woodage T."/>
            <person name="Worley K.C."/>
            <person name="Wu D."/>
            <person name="Yang S."/>
            <person name="Yao Q.A."/>
            <person name="Ye J."/>
            <person name="Yeh R.-F."/>
            <person name="Zaveri J.S."/>
            <person name="Zhan M."/>
            <person name="Zhang G."/>
            <person name="Zhao Q."/>
            <person name="Zheng L."/>
            <person name="Zheng X.H."/>
            <person name="Zhong F.N."/>
            <person name="Zhong W."/>
            <person name="Zhou X."/>
            <person name="Zhu S.C."/>
            <person name="Zhu X."/>
            <person name="Smith H.O."/>
            <person name="Gibbs R.A."/>
            <person name="Myers E.W."/>
            <person name="Rubin G.M."/>
            <person name="Venter J.C."/>
        </authorList>
    </citation>
    <scope>NUCLEOTIDE SEQUENCE [LARGE SCALE GENOMIC DNA]</scope>
    <source>
        <strain>Berkeley</strain>
    </source>
</reference>
<reference key="2">
    <citation type="journal article" date="2002" name="Genome Biol.">
        <title>Annotation of the Drosophila melanogaster euchromatic genome: a systematic review.</title>
        <authorList>
            <person name="Misra S."/>
            <person name="Crosby M.A."/>
            <person name="Mungall C.J."/>
            <person name="Matthews B.B."/>
            <person name="Campbell K.S."/>
            <person name="Hradecky P."/>
            <person name="Huang Y."/>
            <person name="Kaminker J.S."/>
            <person name="Millburn G.H."/>
            <person name="Prochnik S.E."/>
            <person name="Smith C.D."/>
            <person name="Tupy J.L."/>
            <person name="Whitfield E.J."/>
            <person name="Bayraktaroglu L."/>
            <person name="Berman B.P."/>
            <person name="Bettencourt B.R."/>
            <person name="Celniker S.E."/>
            <person name="de Grey A.D.N.J."/>
            <person name="Drysdale R.A."/>
            <person name="Harris N.L."/>
            <person name="Richter J."/>
            <person name="Russo S."/>
            <person name="Schroeder A.J."/>
            <person name="Shu S.Q."/>
            <person name="Stapleton M."/>
            <person name="Yamada C."/>
            <person name="Ashburner M."/>
            <person name="Gelbart W.M."/>
            <person name="Rubin G.M."/>
            <person name="Lewis S.E."/>
        </authorList>
    </citation>
    <scope>GENOME REANNOTATION</scope>
    <source>
        <strain>Berkeley</strain>
    </source>
</reference>
<reference key="3">
    <citation type="journal article" date="2002" name="Genome Biol.">
        <title>A Drosophila full-length cDNA resource.</title>
        <authorList>
            <person name="Stapleton M."/>
            <person name="Carlson J.W."/>
            <person name="Brokstein P."/>
            <person name="Yu C."/>
            <person name="Champe M."/>
            <person name="George R.A."/>
            <person name="Guarin H."/>
            <person name="Kronmiller B."/>
            <person name="Pacleb J.M."/>
            <person name="Park S."/>
            <person name="Wan K.H."/>
            <person name="Rubin G.M."/>
            <person name="Celniker S.E."/>
        </authorList>
    </citation>
    <scope>NUCLEOTIDE SEQUENCE [LARGE SCALE MRNA]</scope>
    <source>
        <strain>Berkeley</strain>
        <tissue>Embryo</tissue>
    </source>
</reference>
<keyword id="KW-1185">Reference proteome</keyword>
<name>U598_DROME</name>
<dbReference type="EMBL" id="AE013599">
    <property type="protein sequence ID" value="AAM71037.1"/>
    <property type="molecule type" value="Genomic_DNA"/>
</dbReference>
<dbReference type="EMBL" id="AY119234">
    <property type="protein sequence ID" value="AAM51094.1"/>
    <property type="molecule type" value="mRNA"/>
</dbReference>
<dbReference type="RefSeq" id="NP_001260836.1">
    <property type="nucleotide sequence ID" value="NM_001273907.1"/>
</dbReference>
<dbReference type="RefSeq" id="NP_724847.1">
    <property type="nucleotide sequence ID" value="NM_165715.1"/>
</dbReference>
<dbReference type="SMR" id="Q8MKL1"/>
<dbReference type="PaxDb" id="7227-FBpp0305134"/>
<dbReference type="DNASU" id="246389"/>
<dbReference type="EnsemblMetazoa" id="FBtr0479882">
    <property type="protein sequence ID" value="FBpp0428215"/>
    <property type="gene ID" value="FBgn0050010"/>
</dbReference>
<dbReference type="GeneID" id="246389"/>
<dbReference type="KEGG" id="dme:Dmel_CG30010"/>
<dbReference type="UCSC" id="CG30010-RA">
    <property type="organism name" value="d. melanogaster"/>
</dbReference>
<dbReference type="AGR" id="FB:FBgn0050010"/>
<dbReference type="FlyBase" id="FBgn0050010">
    <property type="gene designation" value="CG30010"/>
</dbReference>
<dbReference type="VEuPathDB" id="VectorBase:FBgn0050010"/>
<dbReference type="eggNOG" id="ENOG502R8EE">
    <property type="taxonomic scope" value="Eukaryota"/>
</dbReference>
<dbReference type="GeneTree" id="ENSGT00390000011521"/>
<dbReference type="HOGENOM" id="CLU_069446_2_1_1"/>
<dbReference type="InParanoid" id="Q8MKL1"/>
<dbReference type="OrthoDB" id="10260024at2759"/>
<dbReference type="PhylomeDB" id="Q8MKL1"/>
<dbReference type="BioGRID-ORCS" id="246389">
    <property type="hits" value="0 hits in 1 CRISPR screen"/>
</dbReference>
<dbReference type="GenomeRNAi" id="246389"/>
<dbReference type="PRO" id="PR:Q8MKL1"/>
<dbReference type="Proteomes" id="UP000000803">
    <property type="component" value="Chromosome 2R"/>
</dbReference>
<dbReference type="Bgee" id="FBgn0050010">
    <property type="expression patterns" value="Expressed in adult serotonergic neuron in brain and 43 other cell types or tissues"/>
</dbReference>
<dbReference type="ExpressionAtlas" id="Q8MKL1">
    <property type="expression patterns" value="baseline and differential"/>
</dbReference>
<dbReference type="GO" id="GO:0005739">
    <property type="term" value="C:mitochondrion"/>
    <property type="evidence" value="ECO:0000250"/>
    <property type="project" value="FlyBase"/>
</dbReference>
<dbReference type="GO" id="GO:0042060">
    <property type="term" value="P:wound healing"/>
    <property type="evidence" value="ECO:0007001"/>
    <property type="project" value="FlyBase"/>
</dbReference>
<dbReference type="InterPro" id="IPR028108">
    <property type="entry name" value="DUF4505"/>
</dbReference>
<dbReference type="PANTHER" id="PTHR31449">
    <property type="entry name" value="UPF0598 PROTEIN C8ORF82"/>
    <property type="match status" value="1"/>
</dbReference>
<dbReference type="PANTHER" id="PTHR31449:SF3">
    <property type="entry name" value="UPF0598 PROTEIN C8ORF82"/>
    <property type="match status" value="1"/>
</dbReference>
<dbReference type="Pfam" id="PF14956">
    <property type="entry name" value="DUF4505"/>
    <property type="match status" value="1"/>
</dbReference>
<proteinExistence type="evidence at transcript level"/>
<protein>
    <recommendedName>
        <fullName>UPF0598 protein CG30010</fullName>
    </recommendedName>
</protein>
<accession>Q8MKL1</accession>